<reference key="1">
    <citation type="journal article" date="2005" name="Proc. Natl. Acad. Sci. U.S.A.">
        <title>Genome analysis of multiple pathogenic isolates of Streptococcus agalactiae: implications for the microbial 'pan-genome'.</title>
        <authorList>
            <person name="Tettelin H."/>
            <person name="Masignani V."/>
            <person name="Cieslewicz M.J."/>
            <person name="Donati C."/>
            <person name="Medini D."/>
            <person name="Ward N.L."/>
            <person name="Angiuoli S.V."/>
            <person name="Crabtree J."/>
            <person name="Jones A.L."/>
            <person name="Durkin A.S."/>
            <person name="DeBoy R.T."/>
            <person name="Davidsen T.M."/>
            <person name="Mora M."/>
            <person name="Scarselli M."/>
            <person name="Margarit y Ros I."/>
            <person name="Peterson J.D."/>
            <person name="Hauser C.R."/>
            <person name="Sundaram J.P."/>
            <person name="Nelson W.C."/>
            <person name="Madupu R."/>
            <person name="Brinkac L.M."/>
            <person name="Dodson R.J."/>
            <person name="Rosovitz M.J."/>
            <person name="Sullivan S.A."/>
            <person name="Daugherty S.C."/>
            <person name="Haft D.H."/>
            <person name="Selengut J."/>
            <person name="Gwinn M.L."/>
            <person name="Zhou L."/>
            <person name="Zafar N."/>
            <person name="Khouri H."/>
            <person name="Radune D."/>
            <person name="Dimitrov G."/>
            <person name="Watkins K."/>
            <person name="O'Connor K.J."/>
            <person name="Smith S."/>
            <person name="Utterback T.R."/>
            <person name="White O."/>
            <person name="Rubens C.E."/>
            <person name="Grandi G."/>
            <person name="Madoff L.C."/>
            <person name="Kasper D.L."/>
            <person name="Telford J.L."/>
            <person name="Wessels M.R."/>
            <person name="Rappuoli R."/>
            <person name="Fraser C.M."/>
        </authorList>
    </citation>
    <scope>NUCLEOTIDE SEQUENCE [LARGE SCALE GENOMIC DNA]</scope>
    <source>
        <strain>ATCC 27591 / A909 / CDC SS700</strain>
    </source>
</reference>
<feature type="chain" id="PRO_1000017710" description="Adenosine deaminase">
    <location>
        <begin position="1"/>
        <end position="340"/>
    </location>
</feature>
<feature type="active site" description="Proton donor" evidence="1">
    <location>
        <position position="202"/>
    </location>
</feature>
<feature type="binding site" evidence="1">
    <location>
        <position position="15"/>
    </location>
    <ligand>
        <name>Zn(2+)</name>
        <dbReference type="ChEBI" id="CHEBI:29105"/>
        <note>catalytic</note>
    </ligand>
</feature>
<feature type="binding site" evidence="1">
    <location>
        <position position="17"/>
    </location>
    <ligand>
        <name>substrate</name>
    </ligand>
</feature>
<feature type="binding site" evidence="1">
    <location>
        <position position="17"/>
    </location>
    <ligand>
        <name>Zn(2+)</name>
        <dbReference type="ChEBI" id="CHEBI:29105"/>
        <note>catalytic</note>
    </ligand>
</feature>
<feature type="binding site" evidence="1">
    <location>
        <position position="19"/>
    </location>
    <ligand>
        <name>substrate</name>
    </ligand>
</feature>
<feature type="binding site" evidence="1">
    <location>
        <position position="172"/>
    </location>
    <ligand>
        <name>substrate</name>
    </ligand>
</feature>
<feature type="binding site" evidence="1">
    <location>
        <position position="199"/>
    </location>
    <ligand>
        <name>Zn(2+)</name>
        <dbReference type="ChEBI" id="CHEBI:29105"/>
        <note>catalytic</note>
    </ligand>
</feature>
<feature type="binding site" evidence="1">
    <location>
        <position position="279"/>
    </location>
    <ligand>
        <name>Zn(2+)</name>
        <dbReference type="ChEBI" id="CHEBI:29105"/>
        <note>catalytic</note>
    </ligand>
</feature>
<feature type="site" description="Important for catalytic activity" evidence="1">
    <location>
        <position position="222"/>
    </location>
</feature>
<evidence type="ECO:0000255" key="1">
    <source>
        <dbReference type="HAMAP-Rule" id="MF_00540"/>
    </source>
</evidence>
<accession>Q3K2D4</accession>
<sequence>MTQAVLKELAKAELHCHLDGSLSLPAIRKLANMADIILPSSDKELRKYVIAPAQTESLVDYLKTFEFIRPLLQTKEALRFAAYDVARQAALENVIYIEIRFAPELSMDKGLTASDTVLAVLEGLADAQKEFNIVARALVCGMRQSSHKTTKDIIKHIVDLAPKGLVGFDFAGDEFSYPTDSLVDLIQEVKRSGYPMTLHAGECGCAKHIADSLNLGIKRMGHVTALTGQRDLIKRFVEEDVVAEMCLTSNLQTKAASSIQSFPYQELYDAGGKITINTDNRTVSDTNLTKEYSLFVTYFGTKIEDFLVFNQNAVKASFTSDSEKDTLLHKLQENYDSYLK</sequence>
<organism>
    <name type="scientific">Streptococcus agalactiae serotype Ia (strain ATCC 27591 / A909 / CDC SS700)</name>
    <dbReference type="NCBI Taxonomy" id="205921"/>
    <lineage>
        <taxon>Bacteria</taxon>
        <taxon>Bacillati</taxon>
        <taxon>Bacillota</taxon>
        <taxon>Bacilli</taxon>
        <taxon>Lactobacillales</taxon>
        <taxon>Streptococcaceae</taxon>
        <taxon>Streptococcus</taxon>
    </lineage>
</organism>
<comment type="function">
    <text evidence="1">Catalyzes the hydrolytic deamination of adenosine and 2-deoxyadenosine.</text>
</comment>
<comment type="catalytic activity">
    <reaction evidence="1">
        <text>adenosine + H2O + H(+) = inosine + NH4(+)</text>
        <dbReference type="Rhea" id="RHEA:24408"/>
        <dbReference type="ChEBI" id="CHEBI:15377"/>
        <dbReference type="ChEBI" id="CHEBI:15378"/>
        <dbReference type="ChEBI" id="CHEBI:16335"/>
        <dbReference type="ChEBI" id="CHEBI:17596"/>
        <dbReference type="ChEBI" id="CHEBI:28938"/>
        <dbReference type="EC" id="3.5.4.4"/>
    </reaction>
    <physiologicalReaction direction="left-to-right" evidence="1">
        <dbReference type="Rhea" id="RHEA:24409"/>
    </physiologicalReaction>
</comment>
<comment type="catalytic activity">
    <reaction evidence="1">
        <text>2'-deoxyadenosine + H2O + H(+) = 2'-deoxyinosine + NH4(+)</text>
        <dbReference type="Rhea" id="RHEA:28190"/>
        <dbReference type="ChEBI" id="CHEBI:15377"/>
        <dbReference type="ChEBI" id="CHEBI:15378"/>
        <dbReference type="ChEBI" id="CHEBI:17256"/>
        <dbReference type="ChEBI" id="CHEBI:28938"/>
        <dbReference type="ChEBI" id="CHEBI:28997"/>
        <dbReference type="EC" id="3.5.4.4"/>
    </reaction>
    <physiologicalReaction direction="left-to-right" evidence="1">
        <dbReference type="Rhea" id="RHEA:28191"/>
    </physiologicalReaction>
</comment>
<comment type="cofactor">
    <cofactor evidence="1">
        <name>Zn(2+)</name>
        <dbReference type="ChEBI" id="CHEBI:29105"/>
    </cofactor>
    <text evidence="1">Binds 1 zinc ion per subunit.</text>
</comment>
<comment type="similarity">
    <text evidence="1">Belongs to the metallo-dependent hydrolases superfamily. Adenosine and AMP deaminases family. Adenosine deaminase subfamily.</text>
</comment>
<protein>
    <recommendedName>
        <fullName evidence="1">Adenosine deaminase</fullName>
        <ecNumber evidence="1">3.5.4.4</ecNumber>
    </recommendedName>
    <alternativeName>
        <fullName evidence="1">Adenosine aminohydrolase</fullName>
    </alternativeName>
</protein>
<gene>
    <name evidence="1" type="primary">add</name>
    <name type="ordered locus">SAK_0688</name>
</gene>
<keyword id="KW-0378">Hydrolase</keyword>
<keyword id="KW-0479">Metal-binding</keyword>
<keyword id="KW-0546">Nucleotide metabolism</keyword>
<keyword id="KW-0862">Zinc</keyword>
<dbReference type="EC" id="3.5.4.4" evidence="1"/>
<dbReference type="EMBL" id="CP000114">
    <property type="protein sequence ID" value="ABA45869.1"/>
    <property type="molecule type" value="Genomic_DNA"/>
</dbReference>
<dbReference type="RefSeq" id="WP_000189641.1">
    <property type="nucleotide sequence ID" value="NC_007432.1"/>
</dbReference>
<dbReference type="SMR" id="Q3K2D4"/>
<dbReference type="KEGG" id="sak:SAK_0688"/>
<dbReference type="HOGENOM" id="CLU_039228_0_0_9"/>
<dbReference type="GO" id="GO:0005829">
    <property type="term" value="C:cytosol"/>
    <property type="evidence" value="ECO:0007669"/>
    <property type="project" value="TreeGrafter"/>
</dbReference>
<dbReference type="GO" id="GO:0046936">
    <property type="term" value="F:2'-deoxyadenosine deaminase activity"/>
    <property type="evidence" value="ECO:0007669"/>
    <property type="project" value="RHEA"/>
</dbReference>
<dbReference type="GO" id="GO:0004000">
    <property type="term" value="F:adenosine deaminase activity"/>
    <property type="evidence" value="ECO:0007669"/>
    <property type="project" value="UniProtKB-UniRule"/>
</dbReference>
<dbReference type="GO" id="GO:0008270">
    <property type="term" value="F:zinc ion binding"/>
    <property type="evidence" value="ECO:0007669"/>
    <property type="project" value="UniProtKB-UniRule"/>
</dbReference>
<dbReference type="GO" id="GO:0006154">
    <property type="term" value="P:adenosine catabolic process"/>
    <property type="evidence" value="ECO:0007669"/>
    <property type="project" value="TreeGrafter"/>
</dbReference>
<dbReference type="GO" id="GO:0043103">
    <property type="term" value="P:hypoxanthine salvage"/>
    <property type="evidence" value="ECO:0007669"/>
    <property type="project" value="TreeGrafter"/>
</dbReference>
<dbReference type="GO" id="GO:0046103">
    <property type="term" value="P:inosine biosynthetic process"/>
    <property type="evidence" value="ECO:0007669"/>
    <property type="project" value="TreeGrafter"/>
</dbReference>
<dbReference type="GO" id="GO:0009117">
    <property type="term" value="P:nucleotide metabolic process"/>
    <property type="evidence" value="ECO:0007669"/>
    <property type="project" value="UniProtKB-KW"/>
</dbReference>
<dbReference type="GO" id="GO:0009168">
    <property type="term" value="P:purine ribonucleoside monophosphate biosynthetic process"/>
    <property type="evidence" value="ECO:0007669"/>
    <property type="project" value="UniProtKB-UniRule"/>
</dbReference>
<dbReference type="CDD" id="cd01320">
    <property type="entry name" value="ADA"/>
    <property type="match status" value="1"/>
</dbReference>
<dbReference type="Gene3D" id="3.20.20.140">
    <property type="entry name" value="Metal-dependent hydrolases"/>
    <property type="match status" value="1"/>
</dbReference>
<dbReference type="HAMAP" id="MF_00540">
    <property type="entry name" value="A_deaminase"/>
    <property type="match status" value="1"/>
</dbReference>
<dbReference type="InterPro" id="IPR028893">
    <property type="entry name" value="A_deaminase"/>
</dbReference>
<dbReference type="InterPro" id="IPR001365">
    <property type="entry name" value="A_deaminase_dom"/>
</dbReference>
<dbReference type="InterPro" id="IPR006330">
    <property type="entry name" value="Ado/ade_deaminase"/>
</dbReference>
<dbReference type="InterPro" id="IPR032466">
    <property type="entry name" value="Metal_Hydrolase"/>
</dbReference>
<dbReference type="NCBIfam" id="TIGR01430">
    <property type="entry name" value="aden_deam"/>
    <property type="match status" value="1"/>
</dbReference>
<dbReference type="PANTHER" id="PTHR11409">
    <property type="entry name" value="ADENOSINE DEAMINASE"/>
    <property type="match status" value="1"/>
</dbReference>
<dbReference type="PANTHER" id="PTHR11409:SF43">
    <property type="entry name" value="ADENOSINE DEAMINASE"/>
    <property type="match status" value="1"/>
</dbReference>
<dbReference type="Pfam" id="PF00962">
    <property type="entry name" value="A_deaminase"/>
    <property type="match status" value="1"/>
</dbReference>
<dbReference type="SUPFAM" id="SSF51556">
    <property type="entry name" value="Metallo-dependent hydrolases"/>
    <property type="match status" value="1"/>
</dbReference>
<proteinExistence type="inferred from homology"/>
<name>ADD_STRA1</name>